<comment type="similarity">
    <text evidence="1">Belongs to the bacterial ribosomal protein bL33 family.</text>
</comment>
<reference key="1">
    <citation type="journal article" date="2007" name="J. Bacteriol.">
        <title>Whole-genome analysis of the methyl tert-butyl ether-degrading beta-proteobacterium Methylibium petroleiphilum PM1.</title>
        <authorList>
            <person name="Kane S.R."/>
            <person name="Chakicherla A.Y."/>
            <person name="Chain P.S.G."/>
            <person name="Schmidt R."/>
            <person name="Shin M.W."/>
            <person name="Legler T.C."/>
            <person name="Scow K.M."/>
            <person name="Larimer F.W."/>
            <person name="Lucas S.M."/>
            <person name="Richardson P.M."/>
            <person name="Hristova K.R."/>
        </authorList>
    </citation>
    <scope>NUCLEOTIDE SEQUENCE [LARGE SCALE GENOMIC DNA]</scope>
    <source>
        <strain>ATCC BAA-1232 / LMG 22953 / PM1</strain>
    </source>
</reference>
<proteinExistence type="inferred from homology"/>
<feature type="chain" id="PRO_1000115140" description="Large ribosomal subunit protein bL33">
    <location>
        <begin position="1"/>
        <end position="55"/>
    </location>
</feature>
<feature type="region of interest" description="Disordered" evidence="2">
    <location>
        <begin position="1"/>
        <end position="26"/>
    </location>
</feature>
<feature type="compositionally biased region" description="Basic and acidic residues" evidence="2">
    <location>
        <begin position="1"/>
        <end position="11"/>
    </location>
</feature>
<dbReference type="EMBL" id="CP000555">
    <property type="protein sequence ID" value="ABM94077.1"/>
    <property type="molecule type" value="Genomic_DNA"/>
</dbReference>
<dbReference type="RefSeq" id="WP_011828714.1">
    <property type="nucleotide sequence ID" value="NC_008825.1"/>
</dbReference>
<dbReference type="SMR" id="A2SET8"/>
<dbReference type="STRING" id="420662.Mpe_A1116"/>
<dbReference type="KEGG" id="mpt:Mpe_A1116"/>
<dbReference type="eggNOG" id="COG0267">
    <property type="taxonomic scope" value="Bacteria"/>
</dbReference>
<dbReference type="HOGENOM" id="CLU_190949_1_1_4"/>
<dbReference type="Proteomes" id="UP000000366">
    <property type="component" value="Chromosome"/>
</dbReference>
<dbReference type="GO" id="GO:0022625">
    <property type="term" value="C:cytosolic large ribosomal subunit"/>
    <property type="evidence" value="ECO:0007669"/>
    <property type="project" value="TreeGrafter"/>
</dbReference>
<dbReference type="GO" id="GO:0003735">
    <property type="term" value="F:structural constituent of ribosome"/>
    <property type="evidence" value="ECO:0007669"/>
    <property type="project" value="InterPro"/>
</dbReference>
<dbReference type="GO" id="GO:0006412">
    <property type="term" value="P:translation"/>
    <property type="evidence" value="ECO:0007669"/>
    <property type="project" value="UniProtKB-UniRule"/>
</dbReference>
<dbReference type="Gene3D" id="2.20.28.120">
    <property type="entry name" value="Ribosomal protein L33"/>
    <property type="match status" value="1"/>
</dbReference>
<dbReference type="HAMAP" id="MF_00294">
    <property type="entry name" value="Ribosomal_bL33"/>
    <property type="match status" value="1"/>
</dbReference>
<dbReference type="InterPro" id="IPR001705">
    <property type="entry name" value="Ribosomal_bL33"/>
</dbReference>
<dbReference type="InterPro" id="IPR018264">
    <property type="entry name" value="Ribosomal_bL33_CS"/>
</dbReference>
<dbReference type="InterPro" id="IPR038584">
    <property type="entry name" value="Ribosomal_bL33_sf"/>
</dbReference>
<dbReference type="InterPro" id="IPR011332">
    <property type="entry name" value="Ribosomal_zn-bd"/>
</dbReference>
<dbReference type="NCBIfam" id="NF001860">
    <property type="entry name" value="PRK00595.1"/>
    <property type="match status" value="1"/>
</dbReference>
<dbReference type="NCBIfam" id="TIGR01023">
    <property type="entry name" value="rpmG_bact"/>
    <property type="match status" value="1"/>
</dbReference>
<dbReference type="PANTHER" id="PTHR15238">
    <property type="entry name" value="54S RIBOSOMAL PROTEIN L39, MITOCHONDRIAL"/>
    <property type="match status" value="1"/>
</dbReference>
<dbReference type="PANTHER" id="PTHR15238:SF1">
    <property type="entry name" value="LARGE RIBOSOMAL SUBUNIT PROTEIN BL33M"/>
    <property type="match status" value="1"/>
</dbReference>
<dbReference type="Pfam" id="PF00471">
    <property type="entry name" value="Ribosomal_L33"/>
    <property type="match status" value="1"/>
</dbReference>
<dbReference type="SUPFAM" id="SSF57829">
    <property type="entry name" value="Zn-binding ribosomal proteins"/>
    <property type="match status" value="1"/>
</dbReference>
<dbReference type="PROSITE" id="PS00582">
    <property type="entry name" value="RIBOSOMAL_L33"/>
    <property type="match status" value="1"/>
</dbReference>
<sequence>MAKGGREKIKLESTAGTGHFYTTDKNKKLHPEKMELMKFDPKARKHVAYKEVKLK</sequence>
<name>RL33_METPP</name>
<evidence type="ECO:0000255" key="1">
    <source>
        <dbReference type="HAMAP-Rule" id="MF_00294"/>
    </source>
</evidence>
<evidence type="ECO:0000256" key="2">
    <source>
        <dbReference type="SAM" id="MobiDB-lite"/>
    </source>
</evidence>
<evidence type="ECO:0000305" key="3"/>
<protein>
    <recommendedName>
        <fullName evidence="1">Large ribosomal subunit protein bL33</fullName>
    </recommendedName>
    <alternativeName>
        <fullName evidence="3">50S ribosomal protein L33</fullName>
    </alternativeName>
</protein>
<accession>A2SET8</accession>
<keyword id="KW-1185">Reference proteome</keyword>
<keyword id="KW-0687">Ribonucleoprotein</keyword>
<keyword id="KW-0689">Ribosomal protein</keyword>
<organism>
    <name type="scientific">Methylibium petroleiphilum (strain ATCC BAA-1232 / LMG 22953 / PM1)</name>
    <dbReference type="NCBI Taxonomy" id="420662"/>
    <lineage>
        <taxon>Bacteria</taxon>
        <taxon>Pseudomonadati</taxon>
        <taxon>Pseudomonadota</taxon>
        <taxon>Betaproteobacteria</taxon>
        <taxon>Burkholderiales</taxon>
        <taxon>Sphaerotilaceae</taxon>
        <taxon>Methylibium</taxon>
    </lineage>
</organism>
<gene>
    <name evidence="1" type="primary">rpmG</name>
    <name type="ordered locus">Mpe_A1116</name>
</gene>